<dbReference type="EMBL" id="CP001488">
    <property type="protein sequence ID" value="ACO00561.1"/>
    <property type="molecule type" value="Genomic_DNA"/>
</dbReference>
<dbReference type="RefSeq" id="WP_002966765.1">
    <property type="nucleotide sequence ID" value="NC_012441.1"/>
</dbReference>
<dbReference type="SMR" id="C0RIA3"/>
<dbReference type="GeneID" id="93016844"/>
<dbReference type="KEGG" id="bmi:BMEA_A0805"/>
<dbReference type="HOGENOM" id="CLU_108412_0_1_5"/>
<dbReference type="Proteomes" id="UP000001748">
    <property type="component" value="Chromosome I"/>
</dbReference>
<dbReference type="GO" id="GO:0005524">
    <property type="term" value="F:ATP binding"/>
    <property type="evidence" value="ECO:0007669"/>
    <property type="project" value="UniProtKB-KW"/>
</dbReference>
<dbReference type="GO" id="GO:0003677">
    <property type="term" value="F:DNA binding"/>
    <property type="evidence" value="ECO:0007669"/>
    <property type="project" value="UniProtKB-KW"/>
</dbReference>
<dbReference type="GO" id="GO:0008270">
    <property type="term" value="F:zinc ion binding"/>
    <property type="evidence" value="ECO:0007669"/>
    <property type="project" value="UniProtKB-UniRule"/>
</dbReference>
<dbReference type="GO" id="GO:0045892">
    <property type="term" value="P:negative regulation of DNA-templated transcription"/>
    <property type="evidence" value="ECO:0007669"/>
    <property type="project" value="UniProtKB-UniRule"/>
</dbReference>
<dbReference type="HAMAP" id="MF_00440">
    <property type="entry name" value="NrdR"/>
    <property type="match status" value="1"/>
</dbReference>
<dbReference type="InterPro" id="IPR005144">
    <property type="entry name" value="ATP-cone_dom"/>
</dbReference>
<dbReference type="InterPro" id="IPR055173">
    <property type="entry name" value="NrdR-like_N"/>
</dbReference>
<dbReference type="InterPro" id="IPR003796">
    <property type="entry name" value="RNR_NrdR-like"/>
</dbReference>
<dbReference type="NCBIfam" id="TIGR00244">
    <property type="entry name" value="transcriptional regulator NrdR"/>
    <property type="match status" value="1"/>
</dbReference>
<dbReference type="PANTHER" id="PTHR30455">
    <property type="entry name" value="TRANSCRIPTIONAL REPRESSOR NRDR"/>
    <property type="match status" value="1"/>
</dbReference>
<dbReference type="PANTHER" id="PTHR30455:SF2">
    <property type="entry name" value="TRANSCRIPTIONAL REPRESSOR NRDR"/>
    <property type="match status" value="1"/>
</dbReference>
<dbReference type="Pfam" id="PF03477">
    <property type="entry name" value="ATP-cone"/>
    <property type="match status" value="1"/>
</dbReference>
<dbReference type="Pfam" id="PF22811">
    <property type="entry name" value="Zn_ribbon_NrdR"/>
    <property type="match status" value="1"/>
</dbReference>
<dbReference type="PROSITE" id="PS51161">
    <property type="entry name" value="ATP_CONE"/>
    <property type="match status" value="1"/>
</dbReference>
<protein>
    <recommendedName>
        <fullName evidence="1">Transcriptional repressor NrdR</fullName>
    </recommendedName>
</protein>
<evidence type="ECO:0000255" key="1">
    <source>
        <dbReference type="HAMAP-Rule" id="MF_00440"/>
    </source>
</evidence>
<gene>
    <name evidence="1" type="primary">nrdR</name>
    <name type="ordered locus">BMEA_A0805</name>
</gene>
<name>NRDR_BRUMB</name>
<feature type="chain" id="PRO_1000191783" description="Transcriptional repressor NrdR">
    <location>
        <begin position="1"/>
        <end position="158"/>
    </location>
</feature>
<feature type="domain" description="ATP-cone" evidence="1">
    <location>
        <begin position="49"/>
        <end position="139"/>
    </location>
</feature>
<feature type="zinc finger region" evidence="1">
    <location>
        <begin position="3"/>
        <end position="34"/>
    </location>
</feature>
<comment type="function">
    <text evidence="1">Negatively regulates transcription of bacterial ribonucleotide reductase nrd genes and operons by binding to NrdR-boxes.</text>
</comment>
<comment type="cofactor">
    <cofactor evidence="1">
        <name>Zn(2+)</name>
        <dbReference type="ChEBI" id="CHEBI:29105"/>
    </cofactor>
    <text evidence="1">Binds 1 zinc ion.</text>
</comment>
<comment type="similarity">
    <text evidence="1">Belongs to the NrdR family.</text>
</comment>
<accession>C0RIA3</accession>
<keyword id="KW-0067">ATP-binding</keyword>
<keyword id="KW-0238">DNA-binding</keyword>
<keyword id="KW-0479">Metal-binding</keyword>
<keyword id="KW-0547">Nucleotide-binding</keyword>
<keyword id="KW-0678">Repressor</keyword>
<keyword id="KW-0804">Transcription</keyword>
<keyword id="KW-0805">Transcription regulation</keyword>
<keyword id="KW-0862">Zinc</keyword>
<keyword id="KW-0863">Zinc-finger</keyword>
<organism>
    <name type="scientific">Brucella melitensis biotype 2 (strain ATCC 23457)</name>
    <dbReference type="NCBI Taxonomy" id="546272"/>
    <lineage>
        <taxon>Bacteria</taxon>
        <taxon>Pseudomonadati</taxon>
        <taxon>Pseudomonadota</taxon>
        <taxon>Alphaproteobacteria</taxon>
        <taxon>Hyphomicrobiales</taxon>
        <taxon>Brucellaceae</taxon>
        <taxon>Brucella/Ochrobactrum group</taxon>
        <taxon>Brucella</taxon>
    </lineage>
</organism>
<sequence length="158" mass="17933">MRCPYCQSEDTQVKDSRPAEDGAVIRRRRVCSVCGGRFTTFERVQLRDLMVVKKSGRRVPFDRDKLTRSIEVALRKRDVDSERVERAISGIVRQLESAGEAEVTSDEIGRLAMDALKGIDDIAYIRFASVYRNFSKAVDFHNVIDELTVSETGDNLET</sequence>
<proteinExistence type="inferred from homology"/>
<reference key="1">
    <citation type="submission" date="2009-03" db="EMBL/GenBank/DDBJ databases">
        <title>Brucella melitensis ATCC 23457 whole genome shotgun sequencing project.</title>
        <authorList>
            <person name="Setubal J.C."/>
            <person name="Boyle S."/>
            <person name="Crasta O.R."/>
            <person name="Gillespie J.J."/>
            <person name="Kenyon R.W."/>
            <person name="Lu J."/>
            <person name="Mane S."/>
            <person name="Nagrani S."/>
            <person name="Shallom J.M."/>
            <person name="Shallom S."/>
            <person name="Shukla M."/>
            <person name="Snyder E.E."/>
            <person name="Sobral B.W."/>
            <person name="Wattam A.R."/>
            <person name="Will R."/>
            <person name="Williams K."/>
            <person name="Yoo H."/>
            <person name="Munk C."/>
            <person name="Tapia R."/>
            <person name="Han C."/>
            <person name="Detter J.C."/>
            <person name="Bruce D."/>
            <person name="Brettin T.S."/>
        </authorList>
    </citation>
    <scope>NUCLEOTIDE SEQUENCE [LARGE SCALE GENOMIC DNA]</scope>
    <source>
        <strain>ATCC 23457</strain>
    </source>
</reference>